<name>GPMI_ECOL5</name>
<keyword id="KW-0324">Glycolysis</keyword>
<keyword id="KW-0413">Isomerase</keyword>
<keyword id="KW-0464">Manganese</keyword>
<keyword id="KW-0479">Metal-binding</keyword>
<sequence>MSVSKKPMVLVILDGYGYREEQQDNAIFSAKTPVMDALWANRPHTLIDASGLEVGLPDRQMGNSEVGHVNLGAGRIVYQDLTRLDVEIKDRAFFANPVLTGAVDKAKNAGKAVHIMGLLSAGGVHSHEDHIMAMVELAAERGAEKIYLHAFLDGRDTPPRSAESSLKKFEEKFAALGKGRVASIIGRYYAMDRDNRWDRVEKAYDLLTLAQGEFQADTAVAGLQAAYARDENDEFVKATVIRAEGQPDAAMEDGDALIFMNFRADRAREITRAFVNADFDGFARKKVVNVDFVMLTEYAADIKTAVAYPPASLVNTFGEWMAKNDKTQLRISETEKYAHVTFFFNGGVEESFKGEDRILINSPKVATYDLQPEMSSAELTEKLVAAIKSGKYDTIICNYPNGDMVGHTGVMEAAVKAVEALDHCVEEVAKAVESVGGQLLITADHGNAEQMRDPATGQAHTAHTNLPVPLIYVGDKNVKAVEGGKLSDIAPTMLSLMGMEIPQEMTGKPLFIVE</sequence>
<reference key="1">
    <citation type="journal article" date="2006" name="Mol. Microbiol.">
        <title>Role of pathogenicity island-associated integrases in the genome plasticity of uropathogenic Escherichia coli strain 536.</title>
        <authorList>
            <person name="Hochhut B."/>
            <person name="Wilde C."/>
            <person name="Balling G."/>
            <person name="Middendorf B."/>
            <person name="Dobrindt U."/>
            <person name="Brzuszkiewicz E."/>
            <person name="Gottschalk G."/>
            <person name="Carniel E."/>
            <person name="Hacker J."/>
        </authorList>
    </citation>
    <scope>NUCLEOTIDE SEQUENCE [LARGE SCALE GENOMIC DNA]</scope>
    <source>
        <strain>536 / UPEC</strain>
    </source>
</reference>
<feature type="chain" id="PRO_1000063963" description="2,3-bisphosphoglycerate-independent phosphoglycerate mutase">
    <location>
        <begin position="1"/>
        <end position="514"/>
    </location>
</feature>
<feature type="active site" description="Phosphoserine intermediate" evidence="1">
    <location>
        <position position="64"/>
    </location>
</feature>
<feature type="binding site" evidence="1">
    <location>
        <position position="14"/>
    </location>
    <ligand>
        <name>Mn(2+)</name>
        <dbReference type="ChEBI" id="CHEBI:29035"/>
        <label>2</label>
    </ligand>
</feature>
<feature type="binding site" evidence="1">
    <location>
        <position position="64"/>
    </location>
    <ligand>
        <name>Mn(2+)</name>
        <dbReference type="ChEBI" id="CHEBI:29035"/>
        <label>2</label>
    </ligand>
</feature>
<feature type="binding site" evidence="1">
    <location>
        <position position="125"/>
    </location>
    <ligand>
        <name>substrate</name>
    </ligand>
</feature>
<feature type="binding site" evidence="1">
    <location>
        <begin position="155"/>
        <end position="156"/>
    </location>
    <ligand>
        <name>substrate</name>
    </ligand>
</feature>
<feature type="binding site" evidence="1">
    <location>
        <position position="187"/>
    </location>
    <ligand>
        <name>substrate</name>
    </ligand>
</feature>
<feature type="binding site" evidence="1">
    <location>
        <position position="193"/>
    </location>
    <ligand>
        <name>substrate</name>
    </ligand>
</feature>
<feature type="binding site" evidence="1">
    <location>
        <begin position="263"/>
        <end position="266"/>
    </location>
    <ligand>
        <name>substrate</name>
    </ligand>
</feature>
<feature type="binding site" evidence="1">
    <location>
        <position position="336"/>
    </location>
    <ligand>
        <name>substrate</name>
    </ligand>
</feature>
<feature type="binding site" evidence="1">
    <location>
        <position position="403"/>
    </location>
    <ligand>
        <name>Mn(2+)</name>
        <dbReference type="ChEBI" id="CHEBI:29035"/>
        <label>1</label>
    </ligand>
</feature>
<feature type="binding site" evidence="1">
    <location>
        <position position="407"/>
    </location>
    <ligand>
        <name>Mn(2+)</name>
        <dbReference type="ChEBI" id="CHEBI:29035"/>
        <label>1</label>
    </ligand>
</feature>
<feature type="binding site" evidence="1">
    <location>
        <position position="444"/>
    </location>
    <ligand>
        <name>Mn(2+)</name>
        <dbReference type="ChEBI" id="CHEBI:29035"/>
        <label>2</label>
    </ligand>
</feature>
<feature type="binding site" evidence="1">
    <location>
        <position position="445"/>
    </location>
    <ligand>
        <name>Mn(2+)</name>
        <dbReference type="ChEBI" id="CHEBI:29035"/>
        <label>2</label>
    </ligand>
</feature>
<feature type="binding site" evidence="1">
    <location>
        <position position="463"/>
    </location>
    <ligand>
        <name>Mn(2+)</name>
        <dbReference type="ChEBI" id="CHEBI:29035"/>
        <label>1</label>
    </ligand>
</feature>
<dbReference type="EC" id="5.4.2.12" evidence="1"/>
<dbReference type="EMBL" id="CP000247">
    <property type="protein sequence ID" value="ABG71685.1"/>
    <property type="molecule type" value="Genomic_DNA"/>
</dbReference>
<dbReference type="SMR" id="Q0TBJ4"/>
<dbReference type="KEGG" id="ecp:ECP_3713"/>
<dbReference type="HOGENOM" id="CLU_026099_2_0_6"/>
<dbReference type="UniPathway" id="UPA00109">
    <property type="reaction ID" value="UER00186"/>
</dbReference>
<dbReference type="Proteomes" id="UP000009182">
    <property type="component" value="Chromosome"/>
</dbReference>
<dbReference type="GO" id="GO:0005829">
    <property type="term" value="C:cytosol"/>
    <property type="evidence" value="ECO:0007669"/>
    <property type="project" value="TreeGrafter"/>
</dbReference>
<dbReference type="GO" id="GO:0030145">
    <property type="term" value="F:manganese ion binding"/>
    <property type="evidence" value="ECO:0007669"/>
    <property type="project" value="UniProtKB-UniRule"/>
</dbReference>
<dbReference type="GO" id="GO:0004619">
    <property type="term" value="F:phosphoglycerate mutase activity"/>
    <property type="evidence" value="ECO:0007669"/>
    <property type="project" value="UniProtKB-EC"/>
</dbReference>
<dbReference type="GO" id="GO:0006007">
    <property type="term" value="P:glucose catabolic process"/>
    <property type="evidence" value="ECO:0007669"/>
    <property type="project" value="InterPro"/>
</dbReference>
<dbReference type="GO" id="GO:0006096">
    <property type="term" value="P:glycolytic process"/>
    <property type="evidence" value="ECO:0007669"/>
    <property type="project" value="UniProtKB-UniRule"/>
</dbReference>
<dbReference type="CDD" id="cd16010">
    <property type="entry name" value="iPGM"/>
    <property type="match status" value="1"/>
</dbReference>
<dbReference type="FunFam" id="3.40.1450.10:FF:000001">
    <property type="entry name" value="2,3-bisphosphoglycerate-independent phosphoglycerate mutase"/>
    <property type="match status" value="1"/>
</dbReference>
<dbReference type="FunFam" id="3.40.720.10:FF:000001">
    <property type="entry name" value="2,3-bisphosphoglycerate-independent phosphoglycerate mutase"/>
    <property type="match status" value="1"/>
</dbReference>
<dbReference type="Gene3D" id="3.40.720.10">
    <property type="entry name" value="Alkaline Phosphatase, subunit A"/>
    <property type="match status" value="1"/>
</dbReference>
<dbReference type="Gene3D" id="3.40.1450.10">
    <property type="entry name" value="BPG-independent phosphoglycerate mutase, domain B"/>
    <property type="match status" value="1"/>
</dbReference>
<dbReference type="HAMAP" id="MF_01038">
    <property type="entry name" value="GpmI"/>
    <property type="match status" value="1"/>
</dbReference>
<dbReference type="InterPro" id="IPR017850">
    <property type="entry name" value="Alkaline_phosphatase_core_sf"/>
</dbReference>
<dbReference type="InterPro" id="IPR011258">
    <property type="entry name" value="BPG-indep_PGM_N"/>
</dbReference>
<dbReference type="InterPro" id="IPR006124">
    <property type="entry name" value="Metalloenzyme"/>
</dbReference>
<dbReference type="InterPro" id="IPR036646">
    <property type="entry name" value="PGAM_B_sf"/>
</dbReference>
<dbReference type="InterPro" id="IPR005995">
    <property type="entry name" value="Pgm_bpd_ind"/>
</dbReference>
<dbReference type="NCBIfam" id="TIGR01307">
    <property type="entry name" value="pgm_bpd_ind"/>
    <property type="match status" value="1"/>
</dbReference>
<dbReference type="NCBIfam" id="NF003897">
    <property type="entry name" value="PRK05434.1-5"/>
    <property type="match status" value="1"/>
</dbReference>
<dbReference type="PANTHER" id="PTHR31637">
    <property type="entry name" value="2,3-BISPHOSPHOGLYCERATE-INDEPENDENT PHOSPHOGLYCERATE MUTASE"/>
    <property type="match status" value="1"/>
</dbReference>
<dbReference type="PANTHER" id="PTHR31637:SF0">
    <property type="entry name" value="2,3-BISPHOSPHOGLYCERATE-INDEPENDENT PHOSPHOGLYCERATE MUTASE"/>
    <property type="match status" value="1"/>
</dbReference>
<dbReference type="Pfam" id="PF06415">
    <property type="entry name" value="iPGM_N"/>
    <property type="match status" value="1"/>
</dbReference>
<dbReference type="Pfam" id="PF01676">
    <property type="entry name" value="Metalloenzyme"/>
    <property type="match status" value="1"/>
</dbReference>
<dbReference type="PIRSF" id="PIRSF001492">
    <property type="entry name" value="IPGAM"/>
    <property type="match status" value="1"/>
</dbReference>
<dbReference type="SUPFAM" id="SSF64158">
    <property type="entry name" value="2,3-Bisphosphoglycerate-independent phosphoglycerate mutase, substrate-binding domain"/>
    <property type="match status" value="1"/>
</dbReference>
<dbReference type="SUPFAM" id="SSF53649">
    <property type="entry name" value="Alkaline phosphatase-like"/>
    <property type="match status" value="1"/>
</dbReference>
<organism>
    <name type="scientific">Escherichia coli O6:K15:H31 (strain 536 / UPEC)</name>
    <dbReference type="NCBI Taxonomy" id="362663"/>
    <lineage>
        <taxon>Bacteria</taxon>
        <taxon>Pseudomonadati</taxon>
        <taxon>Pseudomonadota</taxon>
        <taxon>Gammaproteobacteria</taxon>
        <taxon>Enterobacterales</taxon>
        <taxon>Enterobacteriaceae</taxon>
        <taxon>Escherichia</taxon>
    </lineage>
</organism>
<evidence type="ECO:0000255" key="1">
    <source>
        <dbReference type="HAMAP-Rule" id="MF_01038"/>
    </source>
</evidence>
<comment type="function">
    <text evidence="1">Catalyzes the interconversion of 2-phosphoglycerate and 3-phosphoglycerate.</text>
</comment>
<comment type="catalytic activity">
    <reaction evidence="1">
        <text>(2R)-2-phosphoglycerate = (2R)-3-phosphoglycerate</text>
        <dbReference type="Rhea" id="RHEA:15901"/>
        <dbReference type="ChEBI" id="CHEBI:58272"/>
        <dbReference type="ChEBI" id="CHEBI:58289"/>
        <dbReference type="EC" id="5.4.2.12"/>
    </reaction>
</comment>
<comment type="cofactor">
    <cofactor evidence="1">
        <name>Mn(2+)</name>
        <dbReference type="ChEBI" id="CHEBI:29035"/>
    </cofactor>
    <text evidence="1">Binds 2 manganese ions per subunit.</text>
</comment>
<comment type="pathway">
    <text evidence="1">Carbohydrate degradation; glycolysis; pyruvate from D-glyceraldehyde 3-phosphate: step 3/5.</text>
</comment>
<comment type="subunit">
    <text evidence="1">Monomer.</text>
</comment>
<comment type="similarity">
    <text evidence="1">Belongs to the BPG-independent phosphoglycerate mutase family.</text>
</comment>
<protein>
    <recommendedName>
        <fullName evidence="1">2,3-bisphosphoglycerate-independent phosphoglycerate mutase</fullName>
        <shortName evidence="1">BPG-independent PGAM</shortName>
        <shortName evidence="1">Phosphoglyceromutase</shortName>
        <shortName evidence="1">iPGM</shortName>
        <ecNumber evidence="1">5.4.2.12</ecNumber>
    </recommendedName>
</protein>
<accession>Q0TBJ4</accession>
<proteinExistence type="inferred from homology"/>
<gene>
    <name evidence="1" type="primary">gpmI</name>
    <name type="ordered locus">ECP_3713</name>
</gene>